<protein>
    <recommendedName>
        <fullName evidence="1">Large ribosomal subunit protein bL32</fullName>
    </recommendedName>
    <alternativeName>
        <fullName evidence="3">50S ribosomal protein L32</fullName>
    </alternativeName>
</protein>
<keyword id="KW-1185">Reference proteome</keyword>
<keyword id="KW-0687">Ribonucleoprotein</keyword>
<keyword id="KW-0689">Ribosomal protein</keyword>
<reference key="1">
    <citation type="journal article" date="2006" name="Appl. Environ. Microbiol.">
        <title>Genome sequence of the chemolithoautotrophic nitrite-oxidizing bacterium Nitrobacter winogradskyi Nb-255.</title>
        <authorList>
            <person name="Starkenburg S.R."/>
            <person name="Chain P.S.G."/>
            <person name="Sayavedra-Soto L.A."/>
            <person name="Hauser L."/>
            <person name="Land M.L."/>
            <person name="Larimer F.W."/>
            <person name="Malfatti S.A."/>
            <person name="Klotz M.G."/>
            <person name="Bottomley P.J."/>
            <person name="Arp D.J."/>
            <person name="Hickey W.J."/>
        </authorList>
    </citation>
    <scope>NUCLEOTIDE SEQUENCE [LARGE SCALE GENOMIC DNA]</scope>
    <source>
        <strain>ATCC 25391 / DSM 10237 / CIP 104748 / NCIMB 11846 / Nb-255</strain>
    </source>
</reference>
<proteinExistence type="inferred from homology"/>
<dbReference type="EMBL" id="CP000115">
    <property type="protein sequence ID" value="ABA03764.1"/>
    <property type="molecule type" value="Genomic_DNA"/>
</dbReference>
<dbReference type="RefSeq" id="WP_011313825.1">
    <property type="nucleotide sequence ID" value="NC_007406.1"/>
</dbReference>
<dbReference type="SMR" id="Q3SVC7"/>
<dbReference type="STRING" id="323098.Nwi_0497"/>
<dbReference type="KEGG" id="nwi:Nwi_0497"/>
<dbReference type="eggNOG" id="COG0333">
    <property type="taxonomic scope" value="Bacteria"/>
</dbReference>
<dbReference type="HOGENOM" id="CLU_129084_2_2_5"/>
<dbReference type="OrthoDB" id="9801927at2"/>
<dbReference type="Proteomes" id="UP000002531">
    <property type="component" value="Chromosome"/>
</dbReference>
<dbReference type="GO" id="GO:0015934">
    <property type="term" value="C:large ribosomal subunit"/>
    <property type="evidence" value="ECO:0007669"/>
    <property type="project" value="InterPro"/>
</dbReference>
<dbReference type="GO" id="GO:0003735">
    <property type="term" value="F:structural constituent of ribosome"/>
    <property type="evidence" value="ECO:0007669"/>
    <property type="project" value="InterPro"/>
</dbReference>
<dbReference type="GO" id="GO:0006412">
    <property type="term" value="P:translation"/>
    <property type="evidence" value="ECO:0007669"/>
    <property type="project" value="UniProtKB-UniRule"/>
</dbReference>
<dbReference type="Gene3D" id="1.20.5.640">
    <property type="entry name" value="Single helix bin"/>
    <property type="match status" value="1"/>
</dbReference>
<dbReference type="HAMAP" id="MF_00340">
    <property type="entry name" value="Ribosomal_bL32"/>
    <property type="match status" value="1"/>
</dbReference>
<dbReference type="InterPro" id="IPR002677">
    <property type="entry name" value="Ribosomal_bL32"/>
</dbReference>
<dbReference type="InterPro" id="IPR044957">
    <property type="entry name" value="Ribosomal_bL32_bact"/>
</dbReference>
<dbReference type="InterPro" id="IPR011332">
    <property type="entry name" value="Ribosomal_zn-bd"/>
</dbReference>
<dbReference type="NCBIfam" id="TIGR01031">
    <property type="entry name" value="rpmF_bact"/>
    <property type="match status" value="1"/>
</dbReference>
<dbReference type="PANTHER" id="PTHR35534">
    <property type="entry name" value="50S RIBOSOMAL PROTEIN L32"/>
    <property type="match status" value="1"/>
</dbReference>
<dbReference type="PANTHER" id="PTHR35534:SF1">
    <property type="entry name" value="LARGE RIBOSOMAL SUBUNIT PROTEIN BL32"/>
    <property type="match status" value="1"/>
</dbReference>
<dbReference type="Pfam" id="PF01783">
    <property type="entry name" value="Ribosomal_L32p"/>
    <property type="match status" value="1"/>
</dbReference>
<dbReference type="SUPFAM" id="SSF57829">
    <property type="entry name" value="Zn-binding ribosomal proteins"/>
    <property type="match status" value="1"/>
</dbReference>
<gene>
    <name evidence="1" type="primary">rpmF</name>
    <name type="ordered locus">Nwi_0497</name>
</gene>
<name>RL32_NITWN</name>
<organism>
    <name type="scientific">Nitrobacter winogradskyi (strain ATCC 25391 / DSM 10237 / CIP 104748 / NCIMB 11846 / Nb-255)</name>
    <dbReference type="NCBI Taxonomy" id="323098"/>
    <lineage>
        <taxon>Bacteria</taxon>
        <taxon>Pseudomonadati</taxon>
        <taxon>Pseudomonadota</taxon>
        <taxon>Alphaproteobacteria</taxon>
        <taxon>Hyphomicrobiales</taxon>
        <taxon>Nitrobacteraceae</taxon>
        <taxon>Nitrobacter</taxon>
    </lineage>
</organism>
<accession>Q3SVC7</accession>
<evidence type="ECO:0000255" key="1">
    <source>
        <dbReference type="HAMAP-Rule" id="MF_00340"/>
    </source>
</evidence>
<evidence type="ECO:0000256" key="2">
    <source>
        <dbReference type="SAM" id="MobiDB-lite"/>
    </source>
</evidence>
<evidence type="ECO:0000305" key="3"/>
<sequence>MAVPRRKTSPSRRGMRRSADAISKPTYAEDKDSGELRRPHHLDLKTGMYKGRQVLKAKSDS</sequence>
<feature type="chain" id="PRO_0000225743" description="Large ribosomal subunit protein bL32">
    <location>
        <begin position="1"/>
        <end position="61"/>
    </location>
</feature>
<feature type="region of interest" description="Disordered" evidence="2">
    <location>
        <begin position="1"/>
        <end position="61"/>
    </location>
</feature>
<feature type="compositionally biased region" description="Basic residues" evidence="2">
    <location>
        <begin position="1"/>
        <end position="16"/>
    </location>
</feature>
<feature type="compositionally biased region" description="Basic and acidic residues" evidence="2">
    <location>
        <begin position="27"/>
        <end position="44"/>
    </location>
</feature>
<comment type="similarity">
    <text evidence="1">Belongs to the bacterial ribosomal protein bL32 family.</text>
</comment>